<protein>
    <recommendedName>
        <fullName>Transcriptional activator hap2</fullName>
    </recommendedName>
</protein>
<proteinExistence type="inferred from homology"/>
<feature type="chain" id="PRO_0000198783" description="Transcriptional activator hap2">
    <location>
        <begin position="1"/>
        <end position="334"/>
    </location>
</feature>
<feature type="DNA-binding region" description="NFYA/HAP2-type" evidence="2">
    <location>
        <begin position="42"/>
        <end position="67"/>
    </location>
</feature>
<feature type="region of interest" description="Disordered" evidence="3">
    <location>
        <begin position="46"/>
        <end position="65"/>
    </location>
</feature>
<feature type="region of interest" description="Disordered" evidence="3">
    <location>
        <begin position="75"/>
        <end position="239"/>
    </location>
</feature>
<feature type="short sequence motif" description="Subunit association domain (SAD)">
    <location>
        <begin position="11"/>
        <end position="35"/>
    </location>
</feature>
<feature type="compositionally biased region" description="Basic residues" evidence="3">
    <location>
        <begin position="48"/>
        <end position="58"/>
    </location>
</feature>
<feature type="compositionally biased region" description="Polar residues" evidence="3">
    <location>
        <begin position="93"/>
        <end position="114"/>
    </location>
</feature>
<feature type="compositionally biased region" description="Low complexity" evidence="3">
    <location>
        <begin position="118"/>
        <end position="141"/>
    </location>
</feature>
<feature type="compositionally biased region" description="Polar residues" evidence="3">
    <location>
        <begin position="142"/>
        <end position="160"/>
    </location>
</feature>
<feature type="compositionally biased region" description="Polar residues" evidence="3">
    <location>
        <begin position="176"/>
        <end position="185"/>
    </location>
</feature>
<feature type="compositionally biased region" description="Polar residues" evidence="3">
    <location>
        <begin position="194"/>
        <end position="213"/>
    </location>
</feature>
<feature type="compositionally biased region" description="Low complexity" evidence="3">
    <location>
        <begin position="215"/>
        <end position="233"/>
    </location>
</feature>
<accession>P24488</accession>
<reference key="1">
    <citation type="journal article" date="1991" name="Mol. Cell. Biol.">
        <title>The Schizosaccharomyces pombe homolog of Saccharomyces cerevisiae HAP2 reveals selective and stringent conservation of the small essential core protein domain.</title>
        <authorList>
            <person name="Olesen J.T."/>
            <person name="Fikes J.D."/>
            <person name="Guarente L."/>
        </authorList>
    </citation>
    <scope>NUCLEOTIDE SEQUENCE [GENOMIC DNA]</scope>
    <source>
        <strain>401</strain>
    </source>
</reference>
<reference key="2">
    <citation type="journal article" date="2002" name="Nature">
        <title>The genome sequence of Schizosaccharomyces pombe.</title>
        <authorList>
            <person name="Wood V."/>
            <person name="Gwilliam R."/>
            <person name="Rajandream M.A."/>
            <person name="Lyne M.H."/>
            <person name="Lyne R."/>
            <person name="Stewart A."/>
            <person name="Sgouros J.G."/>
            <person name="Peat N."/>
            <person name="Hayles J."/>
            <person name="Baker S.G."/>
            <person name="Basham D."/>
            <person name="Bowman S."/>
            <person name="Brooks K."/>
            <person name="Brown D."/>
            <person name="Brown S."/>
            <person name="Chillingworth T."/>
            <person name="Churcher C.M."/>
            <person name="Collins M."/>
            <person name="Connor R."/>
            <person name="Cronin A."/>
            <person name="Davis P."/>
            <person name="Feltwell T."/>
            <person name="Fraser A."/>
            <person name="Gentles S."/>
            <person name="Goble A."/>
            <person name="Hamlin N."/>
            <person name="Harris D.E."/>
            <person name="Hidalgo J."/>
            <person name="Hodgson G."/>
            <person name="Holroyd S."/>
            <person name="Hornsby T."/>
            <person name="Howarth S."/>
            <person name="Huckle E.J."/>
            <person name="Hunt S."/>
            <person name="Jagels K."/>
            <person name="James K.D."/>
            <person name="Jones L."/>
            <person name="Jones M."/>
            <person name="Leather S."/>
            <person name="McDonald S."/>
            <person name="McLean J."/>
            <person name="Mooney P."/>
            <person name="Moule S."/>
            <person name="Mungall K.L."/>
            <person name="Murphy L.D."/>
            <person name="Niblett D."/>
            <person name="Odell C."/>
            <person name="Oliver K."/>
            <person name="O'Neil S."/>
            <person name="Pearson D."/>
            <person name="Quail M.A."/>
            <person name="Rabbinowitsch E."/>
            <person name="Rutherford K.M."/>
            <person name="Rutter S."/>
            <person name="Saunders D."/>
            <person name="Seeger K."/>
            <person name="Sharp S."/>
            <person name="Skelton J."/>
            <person name="Simmonds M.N."/>
            <person name="Squares R."/>
            <person name="Squares S."/>
            <person name="Stevens K."/>
            <person name="Taylor K."/>
            <person name="Taylor R.G."/>
            <person name="Tivey A."/>
            <person name="Walsh S.V."/>
            <person name="Warren T."/>
            <person name="Whitehead S."/>
            <person name="Woodward J.R."/>
            <person name="Volckaert G."/>
            <person name="Aert R."/>
            <person name="Robben J."/>
            <person name="Grymonprez B."/>
            <person name="Weltjens I."/>
            <person name="Vanstreels E."/>
            <person name="Rieger M."/>
            <person name="Schaefer M."/>
            <person name="Mueller-Auer S."/>
            <person name="Gabel C."/>
            <person name="Fuchs M."/>
            <person name="Duesterhoeft A."/>
            <person name="Fritzc C."/>
            <person name="Holzer E."/>
            <person name="Moestl D."/>
            <person name="Hilbert H."/>
            <person name="Borzym K."/>
            <person name="Langer I."/>
            <person name="Beck A."/>
            <person name="Lehrach H."/>
            <person name="Reinhardt R."/>
            <person name="Pohl T.M."/>
            <person name="Eger P."/>
            <person name="Zimmermann W."/>
            <person name="Wedler H."/>
            <person name="Wambutt R."/>
            <person name="Purnelle B."/>
            <person name="Goffeau A."/>
            <person name="Cadieu E."/>
            <person name="Dreano S."/>
            <person name="Gloux S."/>
            <person name="Lelaure V."/>
            <person name="Mottier S."/>
            <person name="Galibert F."/>
            <person name="Aves S.J."/>
            <person name="Xiang Z."/>
            <person name="Hunt C."/>
            <person name="Moore K."/>
            <person name="Hurst S.M."/>
            <person name="Lucas M."/>
            <person name="Rochet M."/>
            <person name="Gaillardin C."/>
            <person name="Tallada V.A."/>
            <person name="Garzon A."/>
            <person name="Thode G."/>
            <person name="Daga R.R."/>
            <person name="Cruzado L."/>
            <person name="Jimenez J."/>
            <person name="Sanchez M."/>
            <person name="del Rey F."/>
            <person name="Benito J."/>
            <person name="Dominguez A."/>
            <person name="Revuelta J.L."/>
            <person name="Moreno S."/>
            <person name="Armstrong J."/>
            <person name="Forsburg S.L."/>
            <person name="Cerutti L."/>
            <person name="Lowe T."/>
            <person name="McCombie W.R."/>
            <person name="Paulsen I."/>
            <person name="Potashkin J."/>
            <person name="Shpakovski G.V."/>
            <person name="Ussery D."/>
            <person name="Barrell B.G."/>
            <person name="Nurse P."/>
        </authorList>
    </citation>
    <scope>NUCLEOTIDE SEQUENCE [LARGE SCALE GENOMIC DNA]</scope>
    <source>
        <strain>972 / ATCC 24843</strain>
    </source>
</reference>
<evidence type="ECO:0000250" key="1"/>
<evidence type="ECO:0000255" key="2">
    <source>
        <dbReference type="PROSITE-ProRule" id="PRU00966"/>
    </source>
</evidence>
<evidence type="ECO:0000256" key="3">
    <source>
        <dbReference type="SAM" id="MobiDB-lite"/>
    </source>
</evidence>
<comment type="function">
    <text>Global regulator of respiratory functions in yeast cells. It belongs to a complex that binds to the sequence CCAAT located upstream of genes involved in mitochondrial electron transport.</text>
</comment>
<comment type="subunit">
    <text evidence="1">Belongs to a heterotrimeric CCAAT-binding complex.</text>
</comment>
<comment type="subcellular location">
    <subcellularLocation>
        <location>Nucleus</location>
    </subcellularLocation>
</comment>
<comment type="similarity">
    <text evidence="2">Belongs to the NFYA/HAP2 subunit family.</text>
</comment>
<gene>
    <name type="primary">hap2</name>
    <name type="synonym">php2</name>
    <name type="ORF">SPBC725.11c</name>
</gene>
<organism>
    <name type="scientific">Schizosaccharomyces pombe (strain 972 / ATCC 24843)</name>
    <name type="common">Fission yeast</name>
    <dbReference type="NCBI Taxonomy" id="284812"/>
    <lineage>
        <taxon>Eukaryota</taxon>
        <taxon>Fungi</taxon>
        <taxon>Dikarya</taxon>
        <taxon>Ascomycota</taxon>
        <taxon>Taphrinomycotina</taxon>
        <taxon>Schizosaccharomycetes</taxon>
        <taxon>Schizosaccharomycetales</taxon>
        <taxon>Schizosaccharomycetaceae</taxon>
        <taxon>Schizosaccharomyces</taxon>
    </lineage>
</organism>
<dbReference type="EMBL" id="M63639">
    <property type="protein sequence ID" value="AAA35322.1"/>
    <property type="molecule type" value="Genomic_DNA"/>
</dbReference>
<dbReference type="EMBL" id="CU329671">
    <property type="protein sequence ID" value="CAA22183.1"/>
    <property type="molecule type" value="Genomic_DNA"/>
</dbReference>
<dbReference type="PIR" id="A39605">
    <property type="entry name" value="A39605"/>
</dbReference>
<dbReference type="RefSeq" id="NP_595491.1">
    <property type="nucleotide sequence ID" value="NM_001021402.2"/>
</dbReference>
<dbReference type="SMR" id="P24488"/>
<dbReference type="BioGRID" id="277676">
    <property type="interactions" value="5"/>
</dbReference>
<dbReference type="STRING" id="284812.P24488"/>
<dbReference type="PaxDb" id="4896-SPBC725.11c.1"/>
<dbReference type="EnsemblFungi" id="SPBC725.11c.1">
    <property type="protein sequence ID" value="SPBC725.11c.1:pep"/>
    <property type="gene ID" value="SPBC725.11c"/>
</dbReference>
<dbReference type="GeneID" id="2541161"/>
<dbReference type="KEGG" id="spo:2541161"/>
<dbReference type="PomBase" id="SPBC725.11c"/>
<dbReference type="VEuPathDB" id="FungiDB:SPBC725.11c"/>
<dbReference type="eggNOG" id="KOG1561">
    <property type="taxonomic scope" value="Eukaryota"/>
</dbReference>
<dbReference type="HOGENOM" id="CLU_831980_0_0_1"/>
<dbReference type="InParanoid" id="P24488"/>
<dbReference type="PRO" id="PR:P24488"/>
<dbReference type="Proteomes" id="UP000002485">
    <property type="component" value="Chromosome II"/>
</dbReference>
<dbReference type="GO" id="GO:0016602">
    <property type="term" value="C:CCAAT-binding factor complex"/>
    <property type="evidence" value="ECO:0000315"/>
    <property type="project" value="PomBase"/>
</dbReference>
<dbReference type="GO" id="GO:0000792">
    <property type="term" value="C:heterochromatin"/>
    <property type="evidence" value="ECO:0000314"/>
    <property type="project" value="PomBase"/>
</dbReference>
<dbReference type="GO" id="GO:0005634">
    <property type="term" value="C:nucleus"/>
    <property type="evidence" value="ECO:0007005"/>
    <property type="project" value="PomBase"/>
</dbReference>
<dbReference type="GO" id="GO:0001228">
    <property type="term" value="F:DNA-binding transcription activator activity, RNA polymerase II-specific"/>
    <property type="evidence" value="ECO:0000314"/>
    <property type="project" value="PomBase"/>
</dbReference>
<dbReference type="GO" id="GO:0140585">
    <property type="term" value="F:promoter-enhancer loop anchoring activity"/>
    <property type="evidence" value="ECO:0000269"/>
    <property type="project" value="PomBase"/>
</dbReference>
<dbReference type="GO" id="GO:0000978">
    <property type="term" value="F:RNA polymerase II cis-regulatory region sequence-specific DNA binding"/>
    <property type="evidence" value="ECO:0000314"/>
    <property type="project" value="PomBase"/>
</dbReference>
<dbReference type="GO" id="GO:0000979">
    <property type="term" value="F:RNA polymerase II core promoter sequence-specific DNA binding"/>
    <property type="evidence" value="ECO:0000314"/>
    <property type="project" value="PomBase"/>
</dbReference>
<dbReference type="GO" id="GO:0043565">
    <property type="term" value="F:sequence-specific DNA binding"/>
    <property type="evidence" value="ECO:0000314"/>
    <property type="project" value="PomBase"/>
</dbReference>
<dbReference type="GO" id="GO:0045944">
    <property type="term" value="P:positive regulation of transcription by RNA polymerase II"/>
    <property type="evidence" value="ECO:0000315"/>
    <property type="project" value="PomBase"/>
</dbReference>
<dbReference type="GO" id="GO:1903715">
    <property type="term" value="P:regulation of aerobic respiration"/>
    <property type="evidence" value="ECO:0000315"/>
    <property type="project" value="PomBase"/>
</dbReference>
<dbReference type="GO" id="GO:0006109">
    <property type="term" value="P:regulation of carbohydrate metabolic process"/>
    <property type="evidence" value="ECO:0000266"/>
    <property type="project" value="PomBase"/>
</dbReference>
<dbReference type="Gene3D" id="6.10.250.2430">
    <property type="match status" value="1"/>
</dbReference>
<dbReference type="InterPro" id="IPR018362">
    <property type="entry name" value="CCAAT-binding_factor_CS"/>
</dbReference>
<dbReference type="InterPro" id="IPR001289">
    <property type="entry name" value="NFYA"/>
</dbReference>
<dbReference type="PANTHER" id="PTHR12632">
    <property type="entry name" value="TRANSCRIPTION FACTOR NF-Y ALPHA-RELATED"/>
    <property type="match status" value="1"/>
</dbReference>
<dbReference type="Pfam" id="PF02045">
    <property type="entry name" value="CBFB_NFYA"/>
    <property type="match status" value="1"/>
</dbReference>
<dbReference type="PRINTS" id="PR00616">
    <property type="entry name" value="CCAATSUBUNTB"/>
</dbReference>
<dbReference type="SMART" id="SM00521">
    <property type="entry name" value="CBF"/>
    <property type="match status" value="1"/>
</dbReference>
<dbReference type="PROSITE" id="PS00686">
    <property type="entry name" value="NFYA_HAP2_1"/>
    <property type="match status" value="1"/>
</dbReference>
<dbReference type="PROSITE" id="PS51152">
    <property type="entry name" value="NFYA_HAP2_2"/>
    <property type="match status" value="1"/>
</dbReference>
<name>HAP2_SCHPO</name>
<sequence length="334" mass="34893">MNPYEPVEGLYVNAKQYHRILKRREARAKLEERLRGVQTTKKPYLHESRHKHAMRRPRGPGGRFLTADKVSKLRAQEAAEAAANGGSTGDDVNATNANDATVPATVSSEVTHTSEGYADSNDSRPSSISNSSESPAPINSATASMSPANNTSGNNITSPNVRGELDMSGNIAMSGGPTNTASTSGPVPHDMTVLPQTDSNTSNLMSSGSQLGSFATASTNGNNSTTTTTSSAAHPGSFHKGTNDYSSTLAGNEHSAFPGLDVYHDDSVSAGAAFIPHNPMDSIDHLDVNDPTATGLPVLPASDIDPLNLTGNTQDSMIIGQQTYPSHGSSGTMK</sequence>
<keyword id="KW-0010">Activator</keyword>
<keyword id="KW-0238">DNA-binding</keyword>
<keyword id="KW-0539">Nucleus</keyword>
<keyword id="KW-1185">Reference proteome</keyword>
<keyword id="KW-0804">Transcription</keyword>
<keyword id="KW-0805">Transcription regulation</keyword>